<feature type="chain" id="PRO_0000371030" description="ATP synthase subunit delta">
    <location>
        <begin position="1"/>
        <end position="180"/>
    </location>
</feature>
<reference key="1">
    <citation type="journal article" date="2004" name="Genome Res.">
        <title>The complete genome and proteome of Mycoplasma mobile.</title>
        <authorList>
            <person name="Jaffe J.D."/>
            <person name="Stange-Thomann N."/>
            <person name="Smith C."/>
            <person name="DeCaprio D."/>
            <person name="Fisher S."/>
            <person name="Butler J."/>
            <person name="Calvo S."/>
            <person name="Elkins T."/>
            <person name="FitzGerald M.G."/>
            <person name="Hafez N."/>
            <person name="Kodira C.D."/>
            <person name="Major J."/>
            <person name="Wang S."/>
            <person name="Wilkinson J."/>
            <person name="Nicol R."/>
            <person name="Nusbaum C."/>
            <person name="Birren B."/>
            <person name="Berg H.C."/>
            <person name="Church G.M."/>
        </authorList>
    </citation>
    <scope>NUCLEOTIDE SEQUENCE [LARGE SCALE GENOMIC DNA]</scope>
    <source>
        <strain>ATCC 43663 / NCTC 11711 / 163 K</strain>
    </source>
</reference>
<proteinExistence type="inferred from homology"/>
<keyword id="KW-0066">ATP synthesis</keyword>
<keyword id="KW-1003">Cell membrane</keyword>
<keyword id="KW-0139">CF(1)</keyword>
<keyword id="KW-0375">Hydrogen ion transport</keyword>
<keyword id="KW-0406">Ion transport</keyword>
<keyword id="KW-0472">Membrane</keyword>
<keyword id="KW-1185">Reference proteome</keyword>
<keyword id="KW-0813">Transport</keyword>
<sequence length="180" mass="21125">MISQNNKGYALALFEIANEELKLEQYFQEVKKLNEIINENEDLVKLLSSKEIQLEKKLKILENIFTNHFTVNINNFLKLIITNNLFIYIKSILKIFLDIASKKLNISYGKIYSSKKLDEKIISNLEKFYSDKLSKKVEMLNLIDTTLIKGIRIEIENTIHENSIKNNIKELQKSILEKEQ</sequence>
<gene>
    <name evidence="1" type="primary">atpH</name>
    <name type="ordered locus">MMOB2120</name>
</gene>
<comment type="function">
    <text evidence="1">F(1)F(0) ATP synthase produces ATP from ADP in the presence of a proton or sodium gradient. F-type ATPases consist of two structural domains, F(1) containing the extramembraneous catalytic core and F(0) containing the membrane proton channel, linked together by a central stalk and a peripheral stalk. During catalysis, ATP synthesis in the catalytic domain of F(1) is coupled via a rotary mechanism of the central stalk subunits to proton translocation.</text>
</comment>
<comment type="function">
    <text evidence="1">This protein is part of the stalk that links CF(0) to CF(1). It either transmits conformational changes from CF(0) to CF(1) or is implicated in proton conduction.</text>
</comment>
<comment type="subunit">
    <text evidence="1">F-type ATPases have 2 components, F(1) - the catalytic core - and F(0) - the membrane proton channel. F(1) has five subunits: alpha(3), beta(3), gamma(1), delta(1), epsilon(1). F(0) has three main subunits: a(1), b(2) and c(10-14). The alpha and beta chains form an alternating ring which encloses part of the gamma chain. F(1) is attached to F(0) by a central stalk formed by the gamma and epsilon chains, while a peripheral stalk is formed by the delta and b chains.</text>
</comment>
<comment type="subcellular location">
    <subcellularLocation>
        <location evidence="1">Cell membrane</location>
        <topology evidence="1">Peripheral membrane protein</topology>
    </subcellularLocation>
</comment>
<comment type="similarity">
    <text evidence="1">Belongs to the ATPase delta chain family.</text>
</comment>
<protein>
    <recommendedName>
        <fullName evidence="1">ATP synthase subunit delta</fullName>
    </recommendedName>
    <alternativeName>
        <fullName evidence="1">ATP synthase F(1) sector subunit delta</fullName>
    </alternativeName>
    <alternativeName>
        <fullName evidence="1">F-type ATPase subunit delta</fullName>
        <shortName evidence="1">F-ATPase subunit delta</shortName>
    </alternativeName>
</protein>
<name>ATPD_MYCM1</name>
<dbReference type="EMBL" id="AE017308">
    <property type="protein sequence ID" value="AAT27698.1"/>
    <property type="molecule type" value="Genomic_DNA"/>
</dbReference>
<dbReference type="RefSeq" id="WP_011264732.1">
    <property type="nucleotide sequence ID" value="NC_006908.1"/>
</dbReference>
<dbReference type="SMR" id="Q6KI78"/>
<dbReference type="STRING" id="267748.MMOB2120"/>
<dbReference type="KEGG" id="mmo:MMOB2120"/>
<dbReference type="eggNOG" id="COG0712">
    <property type="taxonomic scope" value="Bacteria"/>
</dbReference>
<dbReference type="HOGENOM" id="CLU_085114_4_2_14"/>
<dbReference type="OrthoDB" id="9802471at2"/>
<dbReference type="Proteomes" id="UP000009072">
    <property type="component" value="Chromosome"/>
</dbReference>
<dbReference type="GO" id="GO:0005886">
    <property type="term" value="C:plasma membrane"/>
    <property type="evidence" value="ECO:0007669"/>
    <property type="project" value="UniProtKB-SubCell"/>
</dbReference>
<dbReference type="GO" id="GO:0045259">
    <property type="term" value="C:proton-transporting ATP synthase complex"/>
    <property type="evidence" value="ECO:0007669"/>
    <property type="project" value="UniProtKB-KW"/>
</dbReference>
<dbReference type="GO" id="GO:0046933">
    <property type="term" value="F:proton-transporting ATP synthase activity, rotational mechanism"/>
    <property type="evidence" value="ECO:0007669"/>
    <property type="project" value="UniProtKB-UniRule"/>
</dbReference>
<dbReference type="Gene3D" id="1.10.520.20">
    <property type="entry name" value="N-terminal domain of the delta subunit of the F1F0-ATP synthase"/>
    <property type="match status" value="1"/>
</dbReference>
<dbReference type="HAMAP" id="MF_01416">
    <property type="entry name" value="ATP_synth_delta_bact"/>
    <property type="match status" value="1"/>
</dbReference>
<dbReference type="InterPro" id="IPR026015">
    <property type="entry name" value="ATP_synth_OSCP/delta_N_sf"/>
</dbReference>
<dbReference type="InterPro" id="IPR000711">
    <property type="entry name" value="ATPase_OSCP/dsu"/>
</dbReference>
<dbReference type="NCBIfam" id="TIGR01145">
    <property type="entry name" value="ATP_synt_delta"/>
    <property type="match status" value="1"/>
</dbReference>
<dbReference type="NCBIfam" id="NF009975">
    <property type="entry name" value="PRK13436.1"/>
    <property type="match status" value="1"/>
</dbReference>
<dbReference type="PANTHER" id="PTHR11910">
    <property type="entry name" value="ATP SYNTHASE DELTA CHAIN"/>
    <property type="match status" value="1"/>
</dbReference>
<dbReference type="Pfam" id="PF00213">
    <property type="entry name" value="OSCP"/>
    <property type="match status" value="1"/>
</dbReference>
<dbReference type="PRINTS" id="PR00125">
    <property type="entry name" value="ATPASEDELTA"/>
</dbReference>
<dbReference type="SUPFAM" id="SSF47928">
    <property type="entry name" value="N-terminal domain of the delta subunit of the F1F0-ATP synthase"/>
    <property type="match status" value="1"/>
</dbReference>
<accession>Q6KI78</accession>
<evidence type="ECO:0000255" key="1">
    <source>
        <dbReference type="HAMAP-Rule" id="MF_01416"/>
    </source>
</evidence>
<organism>
    <name type="scientific">Mycoplasma mobile (strain ATCC 43663 / 163K / NCTC 11711)</name>
    <name type="common">Mesomycoplasma mobile</name>
    <dbReference type="NCBI Taxonomy" id="267748"/>
    <lineage>
        <taxon>Bacteria</taxon>
        <taxon>Bacillati</taxon>
        <taxon>Mycoplasmatota</taxon>
        <taxon>Mycoplasmoidales</taxon>
        <taxon>Metamycoplasmataceae</taxon>
        <taxon>Mesomycoplasma</taxon>
    </lineage>
</organism>